<keyword id="KW-0378">Hydrolase</keyword>
<keyword id="KW-0511">Multifunctional enzyme</keyword>
<keyword id="KW-0658">Purine biosynthesis</keyword>
<keyword id="KW-0808">Transferase</keyword>
<sequence>MQQRRPVRRALLSVSDKAGIIEFAQALSARGVELLSTGGTARLLAEKGLPVTEVSDYTGFPEMMDGRVKTLHPKVHGGILGRRGQDDAIMEQHHIAPIDMVVVNLYPFAETVAREGCSLEDAVENIDIGGPTMVRSAAKNHKDVAIVVKSSDYDAIIKEMDANEGSLTLDTRFDLAIKAFEHTAAYDSMIANYFGSMVPAYHGESKEAAGRFPRTLNLNFIKKQDMRYGENSHQQAAFYIEENVKEASVATAQQVQGKALSYNNIADTDAALECVKEFNEPACVIVKHANPCGVAVSTTILDAYDRAYKTDPTSAFGGIIAFNRELDAETAQAIISRQFVEVIIAPSATEDALKITAAKQNVRVLTCGQWAQRVPGLDFKRVNGGLLVQDRDLGMVSEAELRVVSKRQPTEQELRDALFCWKVAKFVKSNAIVYAKENMTIGIGAGQMSRVYSAKIAGIKAADEGLEVKGSAMASDAFFPFRDGIDAAAAVGVSCVIQPGGSIRDDEVIAAADEHGIAMIFTDMRHFRH</sequence>
<reference key="1">
    <citation type="journal article" date="2004" name="Nat. Genet.">
        <title>Comparison of genome degradation in Paratyphi A and Typhi, human-restricted serovars of Salmonella enterica that cause typhoid.</title>
        <authorList>
            <person name="McClelland M."/>
            <person name="Sanderson K.E."/>
            <person name="Clifton S.W."/>
            <person name="Latreille P."/>
            <person name="Porwollik S."/>
            <person name="Sabo A."/>
            <person name="Meyer R."/>
            <person name="Bieri T."/>
            <person name="Ozersky P."/>
            <person name="McLellan M."/>
            <person name="Harkins C.R."/>
            <person name="Wang C."/>
            <person name="Nguyen C."/>
            <person name="Berghoff A."/>
            <person name="Elliott G."/>
            <person name="Kohlberg S."/>
            <person name="Strong C."/>
            <person name="Du F."/>
            <person name="Carter J."/>
            <person name="Kremizki C."/>
            <person name="Layman D."/>
            <person name="Leonard S."/>
            <person name="Sun H."/>
            <person name="Fulton L."/>
            <person name="Nash W."/>
            <person name="Miner T."/>
            <person name="Minx P."/>
            <person name="Delehaunty K."/>
            <person name="Fronick C."/>
            <person name="Magrini V."/>
            <person name="Nhan M."/>
            <person name="Warren W."/>
            <person name="Florea L."/>
            <person name="Spieth J."/>
            <person name="Wilson R.K."/>
        </authorList>
    </citation>
    <scope>NUCLEOTIDE SEQUENCE [LARGE SCALE GENOMIC DNA]</scope>
    <source>
        <strain>ATCC 9150 / SARB42</strain>
    </source>
</reference>
<dbReference type="EC" id="2.1.2.3" evidence="1"/>
<dbReference type="EC" id="3.5.4.10" evidence="1"/>
<dbReference type="EMBL" id="CP000026">
    <property type="protein sequence ID" value="AAV79765.1"/>
    <property type="molecule type" value="Genomic_DNA"/>
</dbReference>
<dbReference type="RefSeq" id="WP_001187508.1">
    <property type="nucleotide sequence ID" value="NC_006511.1"/>
</dbReference>
<dbReference type="SMR" id="Q5PKA9"/>
<dbReference type="KEGG" id="spt:SPA4013"/>
<dbReference type="HOGENOM" id="CLU_016316_5_2_6"/>
<dbReference type="UniPathway" id="UPA00074">
    <property type="reaction ID" value="UER00133"/>
</dbReference>
<dbReference type="UniPathway" id="UPA00074">
    <property type="reaction ID" value="UER00135"/>
</dbReference>
<dbReference type="Proteomes" id="UP000008185">
    <property type="component" value="Chromosome"/>
</dbReference>
<dbReference type="GO" id="GO:0005829">
    <property type="term" value="C:cytosol"/>
    <property type="evidence" value="ECO:0007669"/>
    <property type="project" value="TreeGrafter"/>
</dbReference>
<dbReference type="GO" id="GO:0003937">
    <property type="term" value="F:IMP cyclohydrolase activity"/>
    <property type="evidence" value="ECO:0007669"/>
    <property type="project" value="UniProtKB-UniRule"/>
</dbReference>
<dbReference type="GO" id="GO:0004643">
    <property type="term" value="F:phosphoribosylaminoimidazolecarboxamide formyltransferase activity"/>
    <property type="evidence" value="ECO:0007669"/>
    <property type="project" value="UniProtKB-UniRule"/>
</dbReference>
<dbReference type="GO" id="GO:0006189">
    <property type="term" value="P:'de novo' IMP biosynthetic process"/>
    <property type="evidence" value="ECO:0007669"/>
    <property type="project" value="UniProtKB-UniRule"/>
</dbReference>
<dbReference type="CDD" id="cd01421">
    <property type="entry name" value="IMPCH"/>
    <property type="match status" value="1"/>
</dbReference>
<dbReference type="FunFam" id="3.40.140.20:FF:000001">
    <property type="entry name" value="Bifunctional purine biosynthesis protein PurH"/>
    <property type="match status" value="1"/>
</dbReference>
<dbReference type="FunFam" id="3.40.140.20:FF:000002">
    <property type="entry name" value="Bifunctional purine biosynthesis protein PurH"/>
    <property type="match status" value="1"/>
</dbReference>
<dbReference type="FunFam" id="3.40.50.1380:FF:000001">
    <property type="entry name" value="Bifunctional purine biosynthesis protein PurH"/>
    <property type="match status" value="1"/>
</dbReference>
<dbReference type="Gene3D" id="3.40.140.20">
    <property type="match status" value="2"/>
</dbReference>
<dbReference type="Gene3D" id="3.40.50.1380">
    <property type="entry name" value="Methylglyoxal synthase-like domain"/>
    <property type="match status" value="1"/>
</dbReference>
<dbReference type="HAMAP" id="MF_00139">
    <property type="entry name" value="PurH"/>
    <property type="match status" value="1"/>
</dbReference>
<dbReference type="InterPro" id="IPR024051">
    <property type="entry name" value="AICAR_Tfase_dup_dom_sf"/>
</dbReference>
<dbReference type="InterPro" id="IPR016193">
    <property type="entry name" value="Cytidine_deaminase-like"/>
</dbReference>
<dbReference type="InterPro" id="IPR011607">
    <property type="entry name" value="MGS-like_dom"/>
</dbReference>
<dbReference type="InterPro" id="IPR036914">
    <property type="entry name" value="MGS-like_dom_sf"/>
</dbReference>
<dbReference type="InterPro" id="IPR002695">
    <property type="entry name" value="PurH-like"/>
</dbReference>
<dbReference type="NCBIfam" id="NF002049">
    <property type="entry name" value="PRK00881.1"/>
    <property type="match status" value="1"/>
</dbReference>
<dbReference type="NCBIfam" id="TIGR00355">
    <property type="entry name" value="purH"/>
    <property type="match status" value="1"/>
</dbReference>
<dbReference type="PANTHER" id="PTHR11692:SF0">
    <property type="entry name" value="BIFUNCTIONAL PURINE BIOSYNTHESIS PROTEIN ATIC"/>
    <property type="match status" value="1"/>
</dbReference>
<dbReference type="PANTHER" id="PTHR11692">
    <property type="entry name" value="BIFUNCTIONAL PURINE BIOSYNTHESIS PROTEIN PURH"/>
    <property type="match status" value="1"/>
</dbReference>
<dbReference type="Pfam" id="PF01808">
    <property type="entry name" value="AICARFT_IMPCHas"/>
    <property type="match status" value="1"/>
</dbReference>
<dbReference type="Pfam" id="PF02142">
    <property type="entry name" value="MGS"/>
    <property type="match status" value="1"/>
</dbReference>
<dbReference type="PIRSF" id="PIRSF000414">
    <property type="entry name" value="AICARFT_IMPCHas"/>
    <property type="match status" value="1"/>
</dbReference>
<dbReference type="SMART" id="SM00798">
    <property type="entry name" value="AICARFT_IMPCHas"/>
    <property type="match status" value="1"/>
</dbReference>
<dbReference type="SMART" id="SM00851">
    <property type="entry name" value="MGS"/>
    <property type="match status" value="1"/>
</dbReference>
<dbReference type="SUPFAM" id="SSF53927">
    <property type="entry name" value="Cytidine deaminase-like"/>
    <property type="match status" value="1"/>
</dbReference>
<dbReference type="SUPFAM" id="SSF52335">
    <property type="entry name" value="Methylglyoxal synthase-like"/>
    <property type="match status" value="1"/>
</dbReference>
<dbReference type="PROSITE" id="PS51855">
    <property type="entry name" value="MGS"/>
    <property type="match status" value="1"/>
</dbReference>
<proteinExistence type="inferred from homology"/>
<organism>
    <name type="scientific">Salmonella paratyphi A (strain ATCC 9150 / SARB42)</name>
    <dbReference type="NCBI Taxonomy" id="295319"/>
    <lineage>
        <taxon>Bacteria</taxon>
        <taxon>Pseudomonadati</taxon>
        <taxon>Pseudomonadota</taxon>
        <taxon>Gammaproteobacteria</taxon>
        <taxon>Enterobacterales</taxon>
        <taxon>Enterobacteriaceae</taxon>
        <taxon>Salmonella</taxon>
    </lineage>
</organism>
<feature type="chain" id="PRO_1000018949" description="Bifunctional purine biosynthesis protein PurH">
    <location>
        <begin position="1"/>
        <end position="529"/>
    </location>
</feature>
<feature type="domain" description="MGS-like" evidence="2">
    <location>
        <begin position="1"/>
        <end position="148"/>
    </location>
</feature>
<name>PUR9_SALPA</name>
<accession>Q5PKA9</accession>
<comment type="catalytic activity">
    <reaction evidence="1">
        <text>(6R)-10-formyltetrahydrofolate + 5-amino-1-(5-phospho-beta-D-ribosyl)imidazole-4-carboxamide = 5-formamido-1-(5-phospho-D-ribosyl)imidazole-4-carboxamide + (6S)-5,6,7,8-tetrahydrofolate</text>
        <dbReference type="Rhea" id="RHEA:22192"/>
        <dbReference type="ChEBI" id="CHEBI:57453"/>
        <dbReference type="ChEBI" id="CHEBI:58467"/>
        <dbReference type="ChEBI" id="CHEBI:58475"/>
        <dbReference type="ChEBI" id="CHEBI:195366"/>
        <dbReference type="EC" id="2.1.2.3"/>
    </reaction>
</comment>
<comment type="catalytic activity">
    <reaction evidence="1">
        <text>IMP + H2O = 5-formamido-1-(5-phospho-D-ribosyl)imidazole-4-carboxamide</text>
        <dbReference type="Rhea" id="RHEA:18445"/>
        <dbReference type="ChEBI" id="CHEBI:15377"/>
        <dbReference type="ChEBI" id="CHEBI:58053"/>
        <dbReference type="ChEBI" id="CHEBI:58467"/>
        <dbReference type="EC" id="3.5.4.10"/>
    </reaction>
</comment>
<comment type="pathway">
    <text evidence="1">Purine metabolism; IMP biosynthesis via de novo pathway; 5-formamido-1-(5-phospho-D-ribosyl)imidazole-4-carboxamide from 5-amino-1-(5-phospho-D-ribosyl)imidazole-4-carboxamide (10-formyl THF route): step 1/1.</text>
</comment>
<comment type="pathway">
    <text evidence="1">Purine metabolism; IMP biosynthesis via de novo pathway; IMP from 5-formamido-1-(5-phospho-D-ribosyl)imidazole-4-carboxamide: step 1/1.</text>
</comment>
<comment type="domain">
    <text evidence="1">The IMP cyclohydrolase activity resides in the N-terminal region.</text>
</comment>
<comment type="similarity">
    <text evidence="1">Belongs to the PurH family.</text>
</comment>
<gene>
    <name evidence="1" type="primary">purH</name>
    <name type="ordered locus">SPA4013</name>
</gene>
<evidence type="ECO:0000255" key="1">
    <source>
        <dbReference type="HAMAP-Rule" id="MF_00139"/>
    </source>
</evidence>
<evidence type="ECO:0000255" key="2">
    <source>
        <dbReference type="PROSITE-ProRule" id="PRU01202"/>
    </source>
</evidence>
<protein>
    <recommendedName>
        <fullName evidence="1">Bifunctional purine biosynthesis protein PurH</fullName>
    </recommendedName>
    <domain>
        <recommendedName>
            <fullName evidence="1">Phosphoribosylaminoimidazolecarboxamide formyltransferase</fullName>
            <ecNumber evidence="1">2.1.2.3</ecNumber>
        </recommendedName>
        <alternativeName>
            <fullName evidence="1">AICAR transformylase</fullName>
        </alternativeName>
    </domain>
    <domain>
        <recommendedName>
            <fullName evidence="1">IMP cyclohydrolase</fullName>
            <ecNumber evidence="1">3.5.4.10</ecNumber>
        </recommendedName>
        <alternativeName>
            <fullName evidence="1">ATIC</fullName>
        </alternativeName>
        <alternativeName>
            <fullName evidence="1">IMP synthase</fullName>
        </alternativeName>
        <alternativeName>
            <fullName evidence="1">Inosinicase</fullName>
        </alternativeName>
    </domain>
</protein>